<evidence type="ECO:0000255" key="1">
    <source>
        <dbReference type="HAMAP-Rule" id="MF_00379"/>
    </source>
</evidence>
<proteinExistence type="inferred from homology"/>
<protein>
    <recommendedName>
        <fullName evidence="1">tRNA modification GTPase MnmE</fullName>
        <ecNumber evidence="1">3.6.-.-</ecNumber>
    </recommendedName>
</protein>
<organism>
    <name type="scientific">Novosphingobium aromaticivorans (strain ATCC 700278 / DSM 12444 / CCUG 56034 / CIP 105152 / NBRC 16084 / F199)</name>
    <dbReference type="NCBI Taxonomy" id="279238"/>
    <lineage>
        <taxon>Bacteria</taxon>
        <taxon>Pseudomonadati</taxon>
        <taxon>Pseudomonadota</taxon>
        <taxon>Alphaproteobacteria</taxon>
        <taxon>Sphingomonadales</taxon>
        <taxon>Sphingomonadaceae</taxon>
        <taxon>Novosphingobium</taxon>
    </lineage>
</organism>
<comment type="function">
    <text evidence="1">Exhibits a very high intrinsic GTPase hydrolysis rate. Involved in the addition of a carboxymethylaminomethyl (cmnm) group at the wobble position (U34) of certain tRNAs, forming tRNA-cmnm(5)s(2)U34.</text>
</comment>
<comment type="cofactor">
    <cofactor evidence="1">
        <name>K(+)</name>
        <dbReference type="ChEBI" id="CHEBI:29103"/>
    </cofactor>
    <text evidence="1">Binds 1 potassium ion per subunit.</text>
</comment>
<comment type="subunit">
    <text evidence="1">Homodimer. Heterotetramer of two MnmE and two MnmG subunits.</text>
</comment>
<comment type="subcellular location">
    <subcellularLocation>
        <location evidence="1">Cytoplasm</location>
    </subcellularLocation>
</comment>
<comment type="similarity">
    <text evidence="1">Belongs to the TRAFAC class TrmE-Era-EngA-EngB-Septin-like GTPase superfamily. TrmE GTPase family.</text>
</comment>
<reference key="1">
    <citation type="submission" date="2006-01" db="EMBL/GenBank/DDBJ databases">
        <title>Complete sequence of Novosphingobium aromaticivorans DSM 12444.</title>
        <authorList>
            <consortium name="US DOE Joint Genome Institute"/>
            <person name="Copeland A."/>
            <person name="Lucas S."/>
            <person name="Lapidus A."/>
            <person name="Barry K."/>
            <person name="Detter J.C."/>
            <person name="Glavina T."/>
            <person name="Hammon N."/>
            <person name="Israni S."/>
            <person name="Pitluck S."/>
            <person name="Chain P."/>
            <person name="Malfatti S."/>
            <person name="Shin M."/>
            <person name="Vergez L."/>
            <person name="Schmutz J."/>
            <person name="Larimer F."/>
            <person name="Land M."/>
            <person name="Kyrpides N."/>
            <person name="Ivanova N."/>
            <person name="Fredrickson J."/>
            <person name="Balkwill D."/>
            <person name="Romine M.F."/>
            <person name="Richardson P."/>
        </authorList>
    </citation>
    <scope>NUCLEOTIDE SEQUENCE [LARGE SCALE GENOMIC DNA]</scope>
    <source>
        <strain>ATCC 700278 / DSM 12444 / CCUG 56034 / CIP 105152 / NBRC 16084 / F199</strain>
    </source>
</reference>
<keyword id="KW-0963">Cytoplasm</keyword>
<keyword id="KW-0342">GTP-binding</keyword>
<keyword id="KW-0378">Hydrolase</keyword>
<keyword id="KW-0460">Magnesium</keyword>
<keyword id="KW-0479">Metal-binding</keyword>
<keyword id="KW-0547">Nucleotide-binding</keyword>
<keyword id="KW-0630">Potassium</keyword>
<keyword id="KW-1185">Reference proteome</keyword>
<keyword id="KW-0819">tRNA processing</keyword>
<sequence>MTDTIFALSSGQPPAGIGVIRISGPGAGAALSSLAGRLPSPRRATLATLADPRDGTHLDRTMVLWLPGPATATGEDCAELHLHGGRAVIAAVEAALSSLPGLRRARPGEFTRRAFANGRIDLAEAEGLADLLSAETELQRRTALAMAEGALSREVDEWRTTLLQISARLEAALDFSDEDDVGAGDGTQRASLLPPHFAADCISLACSLNTWLDRPRAEPLKEGFRVVLAGPPNAGKSTLFNALVEHEAAITAAEPGTTRDLLTHAAALDGVPFTFVDTAGLRDEGAGEIERIGIARARAAAEKADLILWLGPEGLGPAGRTLWEIAARADDPGAGRKSQCAFHLSAVTGEGMAAFRSALIAHARSALPAPGEAALNQRQHTHLSEVARALEDAAAEQDPLLAAENLRLGRRGLDALVGRTGTEDMLDTLFGRFCIGK</sequence>
<name>MNME_NOVAD</name>
<accession>Q2GC37</accession>
<gene>
    <name evidence="1" type="primary">mnmE</name>
    <name evidence="1" type="synonym">trmE</name>
    <name type="ordered locus">Saro_0137</name>
</gene>
<dbReference type="EC" id="3.6.-.-" evidence="1"/>
<dbReference type="EMBL" id="CP000248">
    <property type="protein sequence ID" value="ABD24586.1"/>
    <property type="molecule type" value="Genomic_DNA"/>
</dbReference>
<dbReference type="RefSeq" id="WP_011443800.1">
    <property type="nucleotide sequence ID" value="NC_007794.1"/>
</dbReference>
<dbReference type="SMR" id="Q2GC37"/>
<dbReference type="STRING" id="279238.Saro_0137"/>
<dbReference type="KEGG" id="nar:Saro_0137"/>
<dbReference type="eggNOG" id="COG0486">
    <property type="taxonomic scope" value="Bacteria"/>
</dbReference>
<dbReference type="HOGENOM" id="CLU_019624_3_1_5"/>
<dbReference type="Proteomes" id="UP000009134">
    <property type="component" value="Chromosome"/>
</dbReference>
<dbReference type="GO" id="GO:0005737">
    <property type="term" value="C:cytoplasm"/>
    <property type="evidence" value="ECO:0007669"/>
    <property type="project" value="UniProtKB-SubCell"/>
</dbReference>
<dbReference type="GO" id="GO:0005525">
    <property type="term" value="F:GTP binding"/>
    <property type="evidence" value="ECO:0007669"/>
    <property type="project" value="UniProtKB-UniRule"/>
</dbReference>
<dbReference type="GO" id="GO:0003924">
    <property type="term" value="F:GTPase activity"/>
    <property type="evidence" value="ECO:0007669"/>
    <property type="project" value="UniProtKB-UniRule"/>
</dbReference>
<dbReference type="GO" id="GO:0046872">
    <property type="term" value="F:metal ion binding"/>
    <property type="evidence" value="ECO:0007669"/>
    <property type="project" value="UniProtKB-KW"/>
</dbReference>
<dbReference type="GO" id="GO:0030488">
    <property type="term" value="P:tRNA methylation"/>
    <property type="evidence" value="ECO:0007669"/>
    <property type="project" value="TreeGrafter"/>
</dbReference>
<dbReference type="GO" id="GO:0002098">
    <property type="term" value="P:tRNA wobble uridine modification"/>
    <property type="evidence" value="ECO:0007669"/>
    <property type="project" value="TreeGrafter"/>
</dbReference>
<dbReference type="CDD" id="cd04164">
    <property type="entry name" value="trmE"/>
    <property type="match status" value="1"/>
</dbReference>
<dbReference type="CDD" id="cd14858">
    <property type="entry name" value="TrmE_N"/>
    <property type="match status" value="1"/>
</dbReference>
<dbReference type="FunFam" id="3.30.1360.120:FF:000007">
    <property type="entry name" value="tRNA modification GTPase GTPBP3, mitochondrial"/>
    <property type="match status" value="1"/>
</dbReference>
<dbReference type="Gene3D" id="3.40.50.300">
    <property type="entry name" value="P-loop containing nucleotide triphosphate hydrolases"/>
    <property type="match status" value="1"/>
</dbReference>
<dbReference type="Gene3D" id="3.30.1360.120">
    <property type="entry name" value="Probable tRNA modification gtpase trme, domain 1"/>
    <property type="match status" value="1"/>
</dbReference>
<dbReference type="Gene3D" id="1.20.120.430">
    <property type="entry name" value="tRNA modification GTPase MnmE domain 2"/>
    <property type="match status" value="1"/>
</dbReference>
<dbReference type="HAMAP" id="MF_00379">
    <property type="entry name" value="GTPase_MnmE"/>
    <property type="match status" value="1"/>
</dbReference>
<dbReference type="InterPro" id="IPR031168">
    <property type="entry name" value="G_TrmE"/>
</dbReference>
<dbReference type="InterPro" id="IPR006073">
    <property type="entry name" value="GTP-bd"/>
</dbReference>
<dbReference type="InterPro" id="IPR018948">
    <property type="entry name" value="GTP-bd_TrmE_N"/>
</dbReference>
<dbReference type="InterPro" id="IPR004520">
    <property type="entry name" value="GTPase_MnmE"/>
</dbReference>
<dbReference type="InterPro" id="IPR027368">
    <property type="entry name" value="MnmE_dom2"/>
</dbReference>
<dbReference type="InterPro" id="IPR025867">
    <property type="entry name" value="MnmE_helical"/>
</dbReference>
<dbReference type="InterPro" id="IPR027417">
    <property type="entry name" value="P-loop_NTPase"/>
</dbReference>
<dbReference type="InterPro" id="IPR005225">
    <property type="entry name" value="Small_GTP-bd"/>
</dbReference>
<dbReference type="InterPro" id="IPR027266">
    <property type="entry name" value="TrmE/GcvT_dom1"/>
</dbReference>
<dbReference type="NCBIfam" id="NF003661">
    <property type="entry name" value="PRK05291.1-3"/>
    <property type="match status" value="1"/>
</dbReference>
<dbReference type="NCBIfam" id="TIGR00231">
    <property type="entry name" value="small_GTP"/>
    <property type="match status" value="1"/>
</dbReference>
<dbReference type="PANTHER" id="PTHR42714">
    <property type="entry name" value="TRNA MODIFICATION GTPASE GTPBP3"/>
    <property type="match status" value="1"/>
</dbReference>
<dbReference type="PANTHER" id="PTHR42714:SF2">
    <property type="entry name" value="TRNA MODIFICATION GTPASE GTPBP3, MITOCHONDRIAL"/>
    <property type="match status" value="1"/>
</dbReference>
<dbReference type="Pfam" id="PF01926">
    <property type="entry name" value="MMR_HSR1"/>
    <property type="match status" value="1"/>
</dbReference>
<dbReference type="Pfam" id="PF12631">
    <property type="entry name" value="MnmE_helical"/>
    <property type="match status" value="1"/>
</dbReference>
<dbReference type="Pfam" id="PF10396">
    <property type="entry name" value="TrmE_N"/>
    <property type="match status" value="1"/>
</dbReference>
<dbReference type="SUPFAM" id="SSF103025">
    <property type="entry name" value="Folate-binding domain"/>
    <property type="match status" value="1"/>
</dbReference>
<dbReference type="SUPFAM" id="SSF52540">
    <property type="entry name" value="P-loop containing nucleoside triphosphate hydrolases"/>
    <property type="match status" value="1"/>
</dbReference>
<dbReference type="SUPFAM" id="SSF116878">
    <property type="entry name" value="TrmE connector domain"/>
    <property type="match status" value="1"/>
</dbReference>
<dbReference type="PROSITE" id="PS51709">
    <property type="entry name" value="G_TRME"/>
    <property type="match status" value="1"/>
</dbReference>
<feature type="chain" id="PRO_0000345856" description="tRNA modification GTPase MnmE">
    <location>
        <begin position="1"/>
        <end position="437"/>
    </location>
</feature>
<feature type="domain" description="TrmE-type G">
    <location>
        <begin position="223"/>
        <end position="364"/>
    </location>
</feature>
<feature type="binding site" evidence="1">
    <location>
        <position position="21"/>
    </location>
    <ligand>
        <name>(6S)-5-formyl-5,6,7,8-tetrahydrofolate</name>
        <dbReference type="ChEBI" id="CHEBI:57457"/>
    </ligand>
</feature>
<feature type="binding site" evidence="1">
    <location>
        <position position="79"/>
    </location>
    <ligand>
        <name>(6S)-5-formyl-5,6,7,8-tetrahydrofolate</name>
        <dbReference type="ChEBI" id="CHEBI:57457"/>
    </ligand>
</feature>
<feature type="binding site" evidence="1">
    <location>
        <position position="119"/>
    </location>
    <ligand>
        <name>(6S)-5-formyl-5,6,7,8-tetrahydrofolate</name>
        <dbReference type="ChEBI" id="CHEBI:57457"/>
    </ligand>
</feature>
<feature type="binding site" evidence="1">
    <location>
        <begin position="233"/>
        <end position="238"/>
    </location>
    <ligand>
        <name>GTP</name>
        <dbReference type="ChEBI" id="CHEBI:37565"/>
    </ligand>
</feature>
<feature type="binding site" evidence="1">
    <location>
        <position position="237"/>
    </location>
    <ligand>
        <name>Mg(2+)</name>
        <dbReference type="ChEBI" id="CHEBI:18420"/>
    </ligand>
</feature>
<feature type="binding site" evidence="1">
    <location>
        <begin position="252"/>
        <end position="258"/>
    </location>
    <ligand>
        <name>GTP</name>
        <dbReference type="ChEBI" id="CHEBI:37565"/>
    </ligand>
</feature>
<feature type="binding site" evidence="1">
    <location>
        <position position="258"/>
    </location>
    <ligand>
        <name>Mg(2+)</name>
        <dbReference type="ChEBI" id="CHEBI:18420"/>
    </ligand>
</feature>
<feature type="binding site" evidence="1">
    <location>
        <begin position="277"/>
        <end position="280"/>
    </location>
    <ligand>
        <name>GTP</name>
        <dbReference type="ChEBI" id="CHEBI:37565"/>
    </ligand>
</feature>
<feature type="binding site" evidence="1">
    <location>
        <position position="437"/>
    </location>
    <ligand>
        <name>(6S)-5-formyl-5,6,7,8-tetrahydrofolate</name>
        <dbReference type="ChEBI" id="CHEBI:57457"/>
    </ligand>
</feature>